<keyword id="KW-0256">Endoplasmic reticulum</keyword>
<keyword id="KW-0472">Membrane</keyword>
<keyword id="KW-1185">Reference proteome</keyword>
<keyword id="KW-0812">Transmembrane</keyword>
<keyword id="KW-1133">Transmembrane helix</keyword>
<keyword id="KW-0813">Transport</keyword>
<gene>
    <name type="primary">PRA1G2</name>
    <name type="ordered locus">At5g56230</name>
    <name type="ORF">K24C1.4</name>
</gene>
<name>PR1G2_ARATH</name>
<sequence>MTPSPPPITYISIPLPTNDVVSRSIHNLTTAISSHRPWSELIFSGDFSLPESFSSLLLRSKTNFNYFFVNYTIIVSTCAAFALITASPVALIVVGAIIALWLIFHFFREDPLILWSFQVGDRTVLLFLVLASVWAIWFTNSAVNLAVGVSVGLLLCIIHAVFRNSDELFLEEDDAINGGLIGSNLR</sequence>
<feature type="chain" id="PRO_0000352264" description="PRA1 family protein G2">
    <location>
        <begin position="1"/>
        <end position="186"/>
    </location>
</feature>
<feature type="transmembrane region" description="Helical" evidence="2">
    <location>
        <begin position="66"/>
        <end position="86"/>
    </location>
</feature>
<feature type="transmembrane region" description="Helical" evidence="2">
    <location>
        <begin position="87"/>
        <end position="107"/>
    </location>
</feature>
<feature type="transmembrane region" description="Helical" evidence="2">
    <location>
        <begin position="119"/>
        <end position="139"/>
    </location>
</feature>
<feature type="transmembrane region" description="Helical" evidence="2">
    <location>
        <begin position="142"/>
        <end position="162"/>
    </location>
</feature>
<accession>Q9FH16</accession>
<protein>
    <recommendedName>
        <fullName>PRA1 family protein G2</fullName>
        <shortName>AtPRA1.G2</shortName>
    </recommendedName>
</protein>
<dbReference type="EMBL" id="AB023029">
    <property type="protein sequence ID" value="BAB09114.1"/>
    <property type="molecule type" value="Genomic_DNA"/>
</dbReference>
<dbReference type="EMBL" id="CP002688">
    <property type="protein sequence ID" value="AED96737.1"/>
    <property type="molecule type" value="Genomic_DNA"/>
</dbReference>
<dbReference type="RefSeq" id="NP_200434.1">
    <property type="nucleotide sequence ID" value="NM_125006.3"/>
</dbReference>
<dbReference type="FunCoup" id="Q9FH16">
    <property type="interactions" value="1510"/>
</dbReference>
<dbReference type="STRING" id="3702.Q9FH16"/>
<dbReference type="PaxDb" id="3702-AT5G56230.1"/>
<dbReference type="EnsemblPlants" id="AT5G56230.1">
    <property type="protein sequence ID" value="AT5G56230.1"/>
    <property type="gene ID" value="AT5G56230"/>
</dbReference>
<dbReference type="GeneID" id="835722"/>
<dbReference type="Gramene" id="AT5G56230.1">
    <property type="protein sequence ID" value="AT5G56230.1"/>
    <property type="gene ID" value="AT5G56230"/>
</dbReference>
<dbReference type="KEGG" id="ath:AT5G56230"/>
<dbReference type="Araport" id="AT5G56230"/>
<dbReference type="TAIR" id="AT5G56230">
    <property type="gene designation" value="PRA1.G2"/>
</dbReference>
<dbReference type="eggNOG" id="KOG3142">
    <property type="taxonomic scope" value="Eukaryota"/>
</dbReference>
<dbReference type="HOGENOM" id="CLU_060198_2_1_1"/>
<dbReference type="InParanoid" id="Q9FH16"/>
<dbReference type="OMA" id="LFFFRED"/>
<dbReference type="PhylomeDB" id="Q9FH16"/>
<dbReference type="PRO" id="PR:Q9FH16"/>
<dbReference type="Proteomes" id="UP000006548">
    <property type="component" value="Chromosome 5"/>
</dbReference>
<dbReference type="ExpressionAtlas" id="Q9FH16">
    <property type="expression patterns" value="baseline and differential"/>
</dbReference>
<dbReference type="GO" id="GO:0005783">
    <property type="term" value="C:endoplasmic reticulum"/>
    <property type="evidence" value="ECO:0000314"/>
    <property type="project" value="TAIR"/>
</dbReference>
<dbReference type="GO" id="GO:0005789">
    <property type="term" value="C:endoplasmic reticulum membrane"/>
    <property type="evidence" value="ECO:0007669"/>
    <property type="project" value="UniProtKB-SubCell"/>
</dbReference>
<dbReference type="GO" id="GO:0016192">
    <property type="term" value="P:vesicle-mediated transport"/>
    <property type="evidence" value="ECO:0000314"/>
    <property type="project" value="TAIR"/>
</dbReference>
<dbReference type="InterPro" id="IPR004895">
    <property type="entry name" value="Prenylated_rab_accept_PRA1"/>
</dbReference>
<dbReference type="PANTHER" id="PTHR19317:SF83">
    <property type="entry name" value="PRA1 FAMILY PROTEIN G2"/>
    <property type="match status" value="1"/>
</dbReference>
<dbReference type="PANTHER" id="PTHR19317">
    <property type="entry name" value="PRENYLATED RAB ACCEPTOR 1-RELATED"/>
    <property type="match status" value="1"/>
</dbReference>
<dbReference type="Pfam" id="PF03208">
    <property type="entry name" value="PRA1"/>
    <property type="match status" value="1"/>
</dbReference>
<organism>
    <name type="scientific">Arabidopsis thaliana</name>
    <name type="common">Mouse-ear cress</name>
    <dbReference type="NCBI Taxonomy" id="3702"/>
    <lineage>
        <taxon>Eukaryota</taxon>
        <taxon>Viridiplantae</taxon>
        <taxon>Streptophyta</taxon>
        <taxon>Embryophyta</taxon>
        <taxon>Tracheophyta</taxon>
        <taxon>Spermatophyta</taxon>
        <taxon>Magnoliopsida</taxon>
        <taxon>eudicotyledons</taxon>
        <taxon>Gunneridae</taxon>
        <taxon>Pentapetalae</taxon>
        <taxon>rosids</taxon>
        <taxon>malvids</taxon>
        <taxon>Brassicales</taxon>
        <taxon>Brassicaceae</taxon>
        <taxon>Camelineae</taxon>
        <taxon>Arabidopsis</taxon>
    </lineage>
</organism>
<comment type="function">
    <text evidence="1">May be involved in both secretory and endocytic intracellular trafficking in the endosomal/prevacuolar compartments.</text>
</comment>
<comment type="subcellular location">
    <subcellularLocation>
        <location evidence="5">Endoplasmic reticulum membrane</location>
        <topology evidence="5">Multi-pass membrane protein</topology>
    </subcellularLocation>
</comment>
<comment type="tissue specificity">
    <text evidence="3">Expressed in roots and trichomes.</text>
</comment>
<comment type="similarity">
    <text evidence="4">Belongs to the PRA1 family.</text>
</comment>
<evidence type="ECO:0000250" key="1"/>
<evidence type="ECO:0000255" key="2"/>
<evidence type="ECO:0000269" key="3">
    <source>
    </source>
</evidence>
<evidence type="ECO:0000305" key="4"/>
<evidence type="ECO:0000305" key="5">
    <source>
    </source>
</evidence>
<reference key="1">
    <citation type="journal article" date="2000" name="DNA Res.">
        <title>Structural analysis of Arabidopsis thaliana chromosome 5. X. Sequence features of the regions of 3,076,755 bp covered by sixty P1 and TAC clones.</title>
        <authorList>
            <person name="Sato S."/>
            <person name="Nakamura Y."/>
            <person name="Kaneko T."/>
            <person name="Katoh T."/>
            <person name="Asamizu E."/>
            <person name="Kotani H."/>
            <person name="Tabata S."/>
        </authorList>
    </citation>
    <scope>NUCLEOTIDE SEQUENCE [LARGE SCALE GENOMIC DNA]</scope>
    <source>
        <strain>cv. Columbia</strain>
    </source>
</reference>
<reference key="2">
    <citation type="journal article" date="2017" name="Plant J.">
        <title>Araport11: a complete reannotation of the Arabidopsis thaliana reference genome.</title>
        <authorList>
            <person name="Cheng C.Y."/>
            <person name="Krishnakumar V."/>
            <person name="Chan A.P."/>
            <person name="Thibaud-Nissen F."/>
            <person name="Schobel S."/>
            <person name="Town C.D."/>
        </authorList>
    </citation>
    <scope>GENOME REANNOTATION</scope>
    <source>
        <strain>cv. Columbia</strain>
    </source>
</reference>
<reference key="3">
    <citation type="journal article" date="2008" name="Plant Physiol.">
        <title>The PRA1 gene family in Arabidopsis.</title>
        <authorList>
            <person name="Alvim Kamei C.L."/>
            <person name="Boruc J."/>
            <person name="Vandepoele K."/>
            <person name="Van den Daele H."/>
            <person name="Maes S."/>
            <person name="Russinova E."/>
            <person name="Inze D."/>
            <person name="de Veylder L."/>
        </authorList>
    </citation>
    <scope>SUBCELLULAR LOCATION</scope>
    <scope>TISSUE SPECIFICITY</scope>
    <scope>GENE FAMILY</scope>
    <scope>NOMENCLATURE</scope>
</reference>
<proteinExistence type="evidence at transcript level"/>